<evidence type="ECO:0000250" key="1">
    <source>
        <dbReference type="UniProtKB" id="Q14849"/>
    </source>
</evidence>
<evidence type="ECO:0000255" key="2"/>
<evidence type="ECO:0000255" key="3">
    <source>
        <dbReference type="PROSITE-ProRule" id="PRU00197"/>
    </source>
</evidence>
<evidence type="ECO:0000255" key="4">
    <source>
        <dbReference type="PROSITE-ProRule" id="PRU00770"/>
    </source>
</evidence>
<evidence type="ECO:0000256" key="5">
    <source>
        <dbReference type="SAM" id="MobiDB-lite"/>
    </source>
</evidence>
<evidence type="ECO:0000305" key="6"/>
<gene>
    <name evidence="1" type="primary">stard3</name>
    <name evidence="1" type="synonym">mln64</name>
</gene>
<reference key="1">
    <citation type="submission" date="2000-07" db="EMBL/GenBank/DDBJ databases">
        <title>Cloning and characterization of trout MLN64.</title>
        <authorList>
            <person name="Goetz F.W."/>
        </authorList>
    </citation>
    <scope>NUCLEOTIDE SEQUENCE [MRNA]</scope>
</reference>
<accession>Q90ZB9</accession>
<organism>
    <name type="scientific">Salvelinus fontinalis</name>
    <name type="common">Brook trout</name>
    <name type="synonym">Salmo fontinalis</name>
    <dbReference type="NCBI Taxonomy" id="8038"/>
    <lineage>
        <taxon>Eukaryota</taxon>
        <taxon>Metazoa</taxon>
        <taxon>Chordata</taxon>
        <taxon>Craniata</taxon>
        <taxon>Vertebrata</taxon>
        <taxon>Euteleostomi</taxon>
        <taxon>Actinopterygii</taxon>
        <taxon>Neopterygii</taxon>
        <taxon>Teleostei</taxon>
        <taxon>Protacanthopterygii</taxon>
        <taxon>Salmoniformes</taxon>
        <taxon>Salmonidae</taxon>
        <taxon>Salmoninae</taxon>
        <taxon>Salvelinus</taxon>
    </lineage>
</organism>
<keyword id="KW-0967">Endosome</keyword>
<keyword id="KW-0445">Lipid transport</keyword>
<keyword id="KW-0446">Lipid-binding</keyword>
<keyword id="KW-0472">Membrane</keyword>
<keyword id="KW-0597">Phosphoprotein</keyword>
<keyword id="KW-0812">Transmembrane</keyword>
<keyword id="KW-0813">Transport</keyword>
<sequence>DGYICNNGMDKEERKMCGLLLLPLRSVSPSAYLAAVNAASERAPMIYPRAVSEGQFYSPPESLAGSEEDLDEEGLGRRAVSPQEKALVRQGKEAMAVVEQILAQEENWKFEKNNDVGDSVYTLEIPFHGKTFILKAFMQCPAELVYQEVILQPEKMAQWNKTVSGCQILQRVDDNTLVSYDIASGAAGGVVSARDFVNVRRVERKRDCYVSAGMATDHDGKPPHSRYVRGENGPGGFVVLKSSSNPSVCTFIWVLNTDLKGRLPRYLIHQSLAATMFEFMAHLRQRIRDLRSTR</sequence>
<feature type="chain" id="PRO_0000220656" description="StAR-related lipid transfer protein 3">
    <location>
        <begin position="1" status="less than"/>
        <end position="294"/>
    </location>
</feature>
<feature type="domain" description="MENTAL" evidence="4">
    <location>
        <begin position="1" status="less than"/>
        <end position="66"/>
    </location>
</feature>
<feature type="domain" description="START" evidence="3">
    <location>
        <begin position="79"/>
        <end position="292"/>
    </location>
</feature>
<feature type="region of interest" description="Disordered" evidence="5">
    <location>
        <begin position="58"/>
        <end position="77"/>
    </location>
</feature>
<feature type="short sequence motif" description="FFAT" evidence="1">
    <location>
        <begin position="55"/>
        <end position="61"/>
    </location>
</feature>
<feature type="non-terminal residue">
    <location>
        <position position="1"/>
    </location>
</feature>
<name>STAR3_SALFO</name>
<comment type="function">
    <text evidence="1">Sterol-binding protein that mediates cholesterol transport from the endoplasmic reticulum to endosomes. The sterol transport mechanism is triggered by phosphorylation of FFAT motif that leads to membrane tethering between the endoplasmic reticulum and late endosomes. Acts as a lipid transfer protein that redirects sterol to the endosome at the expense of the cell membrane and favors membrane formation inside endosomes.</text>
</comment>
<comment type="catalytic activity">
    <reaction evidence="1">
        <text>cholesterol(in) = cholesterol(out)</text>
        <dbReference type="Rhea" id="RHEA:39747"/>
        <dbReference type="ChEBI" id="CHEBI:16113"/>
    </reaction>
</comment>
<comment type="subunit">
    <text evidence="1">Homodimer.</text>
</comment>
<comment type="subcellular location">
    <subcellularLocation>
        <location evidence="1">Late endosome membrane</location>
        <topology evidence="2">Multi-pass membrane protein</topology>
    </subcellularLocation>
    <text evidence="1">Localizes to contact sites between the endoplasmic reticulum and late endosomes: associates with the endoplasmic reticulum membrane via interaction with VAPA and VAPB.</text>
</comment>
<comment type="domain">
    <text evidence="1">The START domain mediates lipid-transfer between membranes. It contains a hydrophobic cavity able to accommodate one lipid molecule, thereby serving as a 'hydrophobic bridge' across the aqueous gap between donor and acceptor organelle membranes.</text>
</comment>
<comment type="domain">
    <text evidence="1">The MENTAL domain anchors the protein in endosome membranes and exposes the START domain in the cytosol.</text>
</comment>
<comment type="PTM">
    <text evidence="1">Phosphorylated. Phosphorylation allows the tethering of two membranes that participates in the formation of ER-endosome contacts. Phosphorylation of FFAT motif drives membrane tethering between the endoplasmic reticulum and late endosomes that in turn allows the efficient transport of sterol mediated by the START domain.</text>
</comment>
<comment type="similarity">
    <text evidence="6">Belongs to the STARD3 family.</text>
</comment>
<proteinExistence type="evidence at transcript level"/>
<protein>
    <recommendedName>
        <fullName evidence="1">StAR-related lipid transfer protein 3</fullName>
    </recommendedName>
    <alternativeName>
        <fullName evidence="1">MLN64-like protein</fullName>
    </alternativeName>
    <alternativeName>
        <fullName evidence="1">START domain-containing protein 3</fullName>
        <shortName evidence="1">StARD3</shortName>
    </alternativeName>
</protein>
<dbReference type="EMBL" id="AF284379">
    <property type="protein sequence ID" value="AAK82981.1"/>
    <property type="molecule type" value="mRNA"/>
</dbReference>
<dbReference type="SMR" id="Q90ZB9"/>
<dbReference type="GO" id="GO:0005789">
    <property type="term" value="C:endoplasmic reticulum membrane"/>
    <property type="evidence" value="ECO:0007669"/>
    <property type="project" value="TreeGrafter"/>
</dbReference>
<dbReference type="GO" id="GO:0140284">
    <property type="term" value="C:endoplasmic reticulum-endosome membrane contact site"/>
    <property type="evidence" value="ECO:0000250"/>
    <property type="project" value="UniProtKB"/>
</dbReference>
<dbReference type="GO" id="GO:0031902">
    <property type="term" value="C:late endosome membrane"/>
    <property type="evidence" value="ECO:0000250"/>
    <property type="project" value="UniProtKB"/>
</dbReference>
<dbReference type="GO" id="GO:0005765">
    <property type="term" value="C:lysosomal membrane"/>
    <property type="evidence" value="ECO:0007669"/>
    <property type="project" value="TreeGrafter"/>
</dbReference>
<dbReference type="GO" id="GO:0044232">
    <property type="term" value="C:organelle membrane contact site"/>
    <property type="evidence" value="ECO:0000250"/>
    <property type="project" value="UniProtKB"/>
</dbReference>
<dbReference type="GO" id="GO:0015485">
    <property type="term" value="F:cholesterol binding"/>
    <property type="evidence" value="ECO:0000250"/>
    <property type="project" value="UniProtKB"/>
</dbReference>
<dbReference type="GO" id="GO:0120020">
    <property type="term" value="F:cholesterol transfer activity"/>
    <property type="evidence" value="ECO:0007669"/>
    <property type="project" value="InterPro"/>
</dbReference>
<dbReference type="GO" id="GO:0042803">
    <property type="term" value="F:protein homodimerization activity"/>
    <property type="evidence" value="ECO:0000250"/>
    <property type="project" value="UniProtKB"/>
</dbReference>
<dbReference type="GO" id="GO:0030301">
    <property type="term" value="P:cholesterol transport"/>
    <property type="evidence" value="ECO:0000250"/>
    <property type="project" value="UniProtKB"/>
</dbReference>
<dbReference type="GO" id="GO:0099044">
    <property type="term" value="P:vesicle tethering to endoplasmic reticulum"/>
    <property type="evidence" value="ECO:0000250"/>
    <property type="project" value="UniProtKB"/>
</dbReference>
<dbReference type="CDD" id="cd08906">
    <property type="entry name" value="START_STARD3-like"/>
    <property type="match status" value="1"/>
</dbReference>
<dbReference type="FunFam" id="3.30.530.20:FF:000014">
    <property type="entry name" value="stAR-related lipid transfer protein 3 isoform X2"/>
    <property type="match status" value="1"/>
</dbReference>
<dbReference type="Gene3D" id="3.30.530.20">
    <property type="match status" value="1"/>
</dbReference>
<dbReference type="InterPro" id="IPR019498">
    <property type="entry name" value="MENTAL"/>
</dbReference>
<dbReference type="InterPro" id="IPR000799">
    <property type="entry name" value="StAR-like"/>
</dbReference>
<dbReference type="InterPro" id="IPR051869">
    <property type="entry name" value="STARD3"/>
</dbReference>
<dbReference type="InterPro" id="IPR029867">
    <property type="entry name" value="STARD3_MLN64_C"/>
</dbReference>
<dbReference type="InterPro" id="IPR023393">
    <property type="entry name" value="START-like_dom_sf"/>
</dbReference>
<dbReference type="InterPro" id="IPR002913">
    <property type="entry name" value="START_lipid-bd_dom"/>
</dbReference>
<dbReference type="PANTHER" id="PTHR46121:SF2">
    <property type="entry name" value="STAR-RELATED LIPID TRANSFER PROTEIN 3"/>
    <property type="match status" value="1"/>
</dbReference>
<dbReference type="PANTHER" id="PTHR46121">
    <property type="entry name" value="STEROIDOGENIC ACUTE REGULATORY PROTEIN-LIKE"/>
    <property type="match status" value="1"/>
</dbReference>
<dbReference type="Pfam" id="PF01852">
    <property type="entry name" value="START"/>
    <property type="match status" value="1"/>
</dbReference>
<dbReference type="PRINTS" id="PR00978">
    <property type="entry name" value="STARPROTEIN"/>
</dbReference>
<dbReference type="SMART" id="SM00234">
    <property type="entry name" value="START"/>
    <property type="match status" value="1"/>
</dbReference>
<dbReference type="SUPFAM" id="SSF55961">
    <property type="entry name" value="Bet v1-like"/>
    <property type="match status" value="1"/>
</dbReference>
<dbReference type="PROSITE" id="PS51439">
    <property type="entry name" value="MENTAL"/>
    <property type="match status" value="1"/>
</dbReference>
<dbReference type="PROSITE" id="PS50848">
    <property type="entry name" value="START"/>
    <property type="match status" value="1"/>
</dbReference>